<comment type="function">
    <text evidence="2">S-adenosyl-L-methionine-dependent 2'-O-ribose methyltransferase that catalyzes the formation of 2'-O-methylguanosine at position 1370 (Gm1370) in the 16S mitochondrial large subunit ribosomal RNA (mtLSU rRNA), a conserved modification in the peptidyl transferase domain of the mtLSU rRNA. Also required for formation of 2'-O-methyluridine at position 1369 (Um1369) mediated by MRM2.</text>
</comment>
<comment type="catalytic activity">
    <reaction evidence="2">
        <text>guanosine(1370) in 16S rRNA + S-adenosyl-L-methionine = 2'-O-methylguanosine(1370) in 16S rRNA + S-adenosyl-L-homocysteine + H(+)</text>
        <dbReference type="Rhea" id="RHEA:47756"/>
        <dbReference type="Rhea" id="RHEA-COMP:11899"/>
        <dbReference type="Rhea" id="RHEA-COMP:11900"/>
        <dbReference type="ChEBI" id="CHEBI:15378"/>
        <dbReference type="ChEBI" id="CHEBI:57856"/>
        <dbReference type="ChEBI" id="CHEBI:59789"/>
        <dbReference type="ChEBI" id="CHEBI:74269"/>
        <dbReference type="ChEBI" id="CHEBI:74445"/>
    </reaction>
</comment>
<comment type="subcellular location">
    <subcellularLocation>
        <location evidence="5">Mitochondrion</location>
    </subcellularLocation>
</comment>
<comment type="similarity">
    <text evidence="6">Belongs to the class IV-like SAM-binding methyltransferase superfamily. RNA methyltransferase TrmH family.</text>
</comment>
<comment type="sequence caution" evidence="6">
    <conflict type="erroneous initiation">
        <sequence resource="EMBL-CDS" id="AAH38288"/>
    </conflict>
</comment>
<comment type="sequence caution" evidence="6">
    <conflict type="erroneous initiation">
        <sequence resource="EMBL-CDS" id="AAH90975"/>
    </conflict>
</comment>
<comment type="sequence caution" evidence="6">
    <conflict type="erroneous initiation">
        <sequence resource="EMBL-CDS" id="AAI15623"/>
    </conflict>
</comment>
<comment type="sequence caution" evidence="6">
    <conflict type="erroneous initiation">
        <sequence resource="EMBL-CDS" id="AAI15624"/>
    </conflict>
</comment>
<comment type="sequence caution" evidence="6">
    <conflict type="frameshift">
        <sequence resource="EMBL-CDS" id="BAC25446"/>
    </conflict>
</comment>
<keyword id="KW-0489">Methyltransferase</keyword>
<keyword id="KW-0496">Mitochondrion</keyword>
<keyword id="KW-1185">Reference proteome</keyword>
<keyword id="KW-0698">rRNA processing</keyword>
<keyword id="KW-0949">S-adenosyl-L-methionine</keyword>
<keyword id="KW-0808">Transferase</keyword>
<keyword id="KW-0809">Transit peptide</keyword>
<dbReference type="EC" id="2.1.1.-" evidence="2"/>
<dbReference type="EMBL" id="AK014739">
    <property type="protein sequence ID" value="BAC25446.1"/>
    <property type="status" value="ALT_FRAME"/>
    <property type="molecule type" value="mRNA"/>
</dbReference>
<dbReference type="EMBL" id="AK147805">
    <property type="protein sequence ID" value="BAE28150.1"/>
    <property type="molecule type" value="mRNA"/>
</dbReference>
<dbReference type="EMBL" id="AL591129">
    <property type="status" value="NOT_ANNOTATED_CDS"/>
    <property type="molecule type" value="Genomic_DNA"/>
</dbReference>
<dbReference type="EMBL" id="BC038288">
    <property type="protein sequence ID" value="AAH38288.1"/>
    <property type="status" value="ALT_INIT"/>
    <property type="molecule type" value="mRNA"/>
</dbReference>
<dbReference type="EMBL" id="BC090975">
    <property type="protein sequence ID" value="AAH90975.2"/>
    <property type="status" value="ALT_INIT"/>
    <property type="molecule type" value="mRNA"/>
</dbReference>
<dbReference type="EMBL" id="BC115622">
    <property type="protein sequence ID" value="AAI15623.1"/>
    <property type="status" value="ALT_INIT"/>
    <property type="molecule type" value="mRNA"/>
</dbReference>
<dbReference type="EMBL" id="BC115623">
    <property type="protein sequence ID" value="AAI15624.1"/>
    <property type="status" value="ALT_INIT"/>
    <property type="molecule type" value="mRNA"/>
</dbReference>
<dbReference type="CCDS" id="CCDS48852.1"/>
<dbReference type="RefSeq" id="NP_899086.2">
    <property type="nucleotide sequence ID" value="NM_183263.5"/>
</dbReference>
<dbReference type="SMR" id="Q5ND52"/>
<dbReference type="BioGRID" id="212154">
    <property type="interactions" value="3"/>
</dbReference>
<dbReference type="FunCoup" id="Q5ND52">
    <property type="interactions" value="851"/>
</dbReference>
<dbReference type="STRING" id="10090.ENSMUSP00000042882"/>
<dbReference type="iPTMnet" id="Q5ND52"/>
<dbReference type="PhosphoSitePlus" id="Q5ND52"/>
<dbReference type="PaxDb" id="10090-ENSMUSP00000042882"/>
<dbReference type="PeptideAtlas" id="Q5ND52"/>
<dbReference type="ProteomicsDB" id="291510"/>
<dbReference type="Pumba" id="Q5ND52"/>
<dbReference type="Antibodypedia" id="10311">
    <property type="antibodies" value="104 antibodies from 20 providers"/>
</dbReference>
<dbReference type="DNASU" id="67390"/>
<dbReference type="Ensembl" id="ENSMUST00000040577.5">
    <property type="protein sequence ID" value="ENSMUSP00000042882.5"/>
    <property type="gene ID" value="ENSMUSG00000038046.5"/>
</dbReference>
<dbReference type="GeneID" id="67390"/>
<dbReference type="KEGG" id="mmu:67390"/>
<dbReference type="UCSC" id="uc007kfn.2">
    <property type="organism name" value="mouse"/>
</dbReference>
<dbReference type="AGR" id="MGI:1914640"/>
<dbReference type="CTD" id="55178"/>
<dbReference type="MGI" id="MGI:1914640">
    <property type="gene designation" value="Mrm3"/>
</dbReference>
<dbReference type="VEuPathDB" id="HostDB:ENSMUSG00000038046"/>
<dbReference type="eggNOG" id="KOG2506">
    <property type="taxonomic scope" value="Eukaryota"/>
</dbReference>
<dbReference type="GeneTree" id="ENSGT00390000017317"/>
<dbReference type="HOGENOM" id="CLU_021322_1_0_1"/>
<dbReference type="InParanoid" id="Q5ND52"/>
<dbReference type="OMA" id="FLKFHKY"/>
<dbReference type="OrthoDB" id="270651at2759"/>
<dbReference type="PhylomeDB" id="Q5ND52"/>
<dbReference type="TreeFam" id="TF323420"/>
<dbReference type="BioGRID-ORCS" id="67390">
    <property type="hits" value="8 hits in 77 CRISPR screens"/>
</dbReference>
<dbReference type="PRO" id="PR:Q5ND52"/>
<dbReference type="Proteomes" id="UP000000589">
    <property type="component" value="Chromosome 11"/>
</dbReference>
<dbReference type="RNAct" id="Q5ND52">
    <property type="molecule type" value="protein"/>
</dbReference>
<dbReference type="Bgee" id="ENSMUSG00000038046">
    <property type="expression patterns" value="Expressed in digastric muscle group and 253 other cell types or tissues"/>
</dbReference>
<dbReference type="GO" id="GO:0005759">
    <property type="term" value="C:mitochondrial matrix"/>
    <property type="evidence" value="ECO:0007669"/>
    <property type="project" value="Ensembl"/>
</dbReference>
<dbReference type="GO" id="GO:0005739">
    <property type="term" value="C:mitochondrion"/>
    <property type="evidence" value="ECO:0007005"/>
    <property type="project" value="MGI"/>
</dbReference>
<dbReference type="GO" id="GO:0042802">
    <property type="term" value="F:identical protein binding"/>
    <property type="evidence" value="ECO:0007669"/>
    <property type="project" value="Ensembl"/>
</dbReference>
<dbReference type="GO" id="GO:0003723">
    <property type="term" value="F:RNA binding"/>
    <property type="evidence" value="ECO:0007669"/>
    <property type="project" value="InterPro"/>
</dbReference>
<dbReference type="GO" id="GO:0070039">
    <property type="term" value="F:rRNA (guanosine-2'-O-)-methyltransferase activity"/>
    <property type="evidence" value="ECO:0007669"/>
    <property type="project" value="Ensembl"/>
</dbReference>
<dbReference type="CDD" id="cd18106">
    <property type="entry name" value="SpoU-like_RNMTL1"/>
    <property type="match status" value="1"/>
</dbReference>
<dbReference type="Gene3D" id="3.30.1330.30">
    <property type="match status" value="1"/>
</dbReference>
<dbReference type="Gene3D" id="3.40.1280.10">
    <property type="match status" value="1"/>
</dbReference>
<dbReference type="InterPro" id="IPR029028">
    <property type="entry name" value="Alpha/beta_knot_MTases"/>
</dbReference>
<dbReference type="InterPro" id="IPR053888">
    <property type="entry name" value="MRM3-like_sub_bind"/>
</dbReference>
<dbReference type="InterPro" id="IPR029064">
    <property type="entry name" value="Ribosomal_eL30-like_sf"/>
</dbReference>
<dbReference type="InterPro" id="IPR051259">
    <property type="entry name" value="rRNA_Methyltransferase"/>
</dbReference>
<dbReference type="InterPro" id="IPR001537">
    <property type="entry name" value="SpoU_MeTrfase"/>
</dbReference>
<dbReference type="InterPro" id="IPR013123">
    <property type="entry name" value="SpoU_subst-bd"/>
</dbReference>
<dbReference type="InterPro" id="IPR029026">
    <property type="entry name" value="tRNA_m1G_MTases_N"/>
</dbReference>
<dbReference type="PANTHER" id="PTHR43191">
    <property type="entry name" value="RRNA METHYLTRANSFERASE 3"/>
    <property type="match status" value="1"/>
</dbReference>
<dbReference type="PANTHER" id="PTHR43191:SF2">
    <property type="entry name" value="RRNA METHYLTRANSFERASE 3, MITOCHONDRIAL"/>
    <property type="match status" value="1"/>
</dbReference>
<dbReference type="Pfam" id="PF22435">
    <property type="entry name" value="MRM3-like_sub_bind"/>
    <property type="match status" value="1"/>
</dbReference>
<dbReference type="Pfam" id="PF00588">
    <property type="entry name" value="SpoU_methylase"/>
    <property type="match status" value="1"/>
</dbReference>
<dbReference type="SMART" id="SM00967">
    <property type="entry name" value="SpoU_sub_bind"/>
    <property type="match status" value="1"/>
</dbReference>
<dbReference type="SUPFAM" id="SSF75217">
    <property type="entry name" value="alpha/beta knot"/>
    <property type="match status" value="1"/>
</dbReference>
<dbReference type="SUPFAM" id="SSF55315">
    <property type="entry name" value="L30e-like"/>
    <property type="match status" value="1"/>
</dbReference>
<accession>Q5ND52</accession>
<accession>A4FUR4</accession>
<accession>Q3UGQ7</accession>
<accession>Q5U5W2</accession>
<accession>Q8C1J9</accession>
<sequence length="418" mass="46796">MAAPAKGMWCSLGSLLRVVQTRDLNARRWVRALRRSPVRVLSPSGQVEERKRAPDQQPRKAVPKASSQGQRQKQPLETSPSQTPHTWEEAGLRYDKAFPGDRRLSSVMTIVKSRPFREKQGKILLEGRRLIADALKAGAVPKAFFFSRLEYVKELPVDKLKDVSLIKVKFEDIKDWSDLVTPQGIMGIFAKPDPVKMTYPETPLHHTLPLVLICDNLRDPGNLGTILRSAAGAGCSKVLLTKGCVDAWEPKVLRAGMGAHFQVPIVNNVEWETVPNHLPPDTRVYVADNCGHYAQVQMSDKTGDRDWACDRRFLKFHKYEEDLDTKTRKDWLPKLEVQSYDLDWTGAPAAVVIGGETHGVSLESLQLAESTGGKRLLIPVVPGVDSLNSAMAASILLFEGKRQLRIKVEDLSRDRSYH</sequence>
<organism>
    <name type="scientific">Mus musculus</name>
    <name type="common">Mouse</name>
    <dbReference type="NCBI Taxonomy" id="10090"/>
    <lineage>
        <taxon>Eukaryota</taxon>
        <taxon>Metazoa</taxon>
        <taxon>Chordata</taxon>
        <taxon>Craniata</taxon>
        <taxon>Vertebrata</taxon>
        <taxon>Euteleostomi</taxon>
        <taxon>Mammalia</taxon>
        <taxon>Eutheria</taxon>
        <taxon>Euarchontoglires</taxon>
        <taxon>Glires</taxon>
        <taxon>Rodentia</taxon>
        <taxon>Myomorpha</taxon>
        <taxon>Muroidea</taxon>
        <taxon>Muridae</taxon>
        <taxon>Murinae</taxon>
        <taxon>Mus</taxon>
        <taxon>Mus</taxon>
    </lineage>
</organism>
<evidence type="ECO:0000250" key="1"/>
<evidence type="ECO:0000250" key="2">
    <source>
        <dbReference type="UniProtKB" id="Q9HC36"/>
    </source>
</evidence>
<evidence type="ECO:0000255" key="3"/>
<evidence type="ECO:0000256" key="4">
    <source>
        <dbReference type="SAM" id="MobiDB-lite"/>
    </source>
</evidence>
<evidence type="ECO:0000269" key="5">
    <source>
    </source>
</evidence>
<evidence type="ECO:0000305" key="6"/>
<evidence type="ECO:0000312" key="7">
    <source>
        <dbReference type="MGI" id="MGI:1914640"/>
    </source>
</evidence>
<reference key="1">
    <citation type="journal article" date="2005" name="Science">
        <title>The transcriptional landscape of the mammalian genome.</title>
        <authorList>
            <person name="Carninci P."/>
            <person name="Kasukawa T."/>
            <person name="Katayama S."/>
            <person name="Gough J."/>
            <person name="Frith M.C."/>
            <person name="Maeda N."/>
            <person name="Oyama R."/>
            <person name="Ravasi T."/>
            <person name="Lenhard B."/>
            <person name="Wells C."/>
            <person name="Kodzius R."/>
            <person name="Shimokawa K."/>
            <person name="Bajic V.B."/>
            <person name="Brenner S.E."/>
            <person name="Batalov S."/>
            <person name="Forrest A.R."/>
            <person name="Zavolan M."/>
            <person name="Davis M.J."/>
            <person name="Wilming L.G."/>
            <person name="Aidinis V."/>
            <person name="Allen J.E."/>
            <person name="Ambesi-Impiombato A."/>
            <person name="Apweiler R."/>
            <person name="Aturaliya R.N."/>
            <person name="Bailey T.L."/>
            <person name="Bansal M."/>
            <person name="Baxter L."/>
            <person name="Beisel K.W."/>
            <person name="Bersano T."/>
            <person name="Bono H."/>
            <person name="Chalk A.M."/>
            <person name="Chiu K.P."/>
            <person name="Choudhary V."/>
            <person name="Christoffels A."/>
            <person name="Clutterbuck D.R."/>
            <person name="Crowe M.L."/>
            <person name="Dalla E."/>
            <person name="Dalrymple B.P."/>
            <person name="de Bono B."/>
            <person name="Della Gatta G."/>
            <person name="di Bernardo D."/>
            <person name="Down T."/>
            <person name="Engstrom P."/>
            <person name="Fagiolini M."/>
            <person name="Faulkner G."/>
            <person name="Fletcher C.F."/>
            <person name="Fukushima T."/>
            <person name="Furuno M."/>
            <person name="Futaki S."/>
            <person name="Gariboldi M."/>
            <person name="Georgii-Hemming P."/>
            <person name="Gingeras T.R."/>
            <person name="Gojobori T."/>
            <person name="Green R.E."/>
            <person name="Gustincich S."/>
            <person name="Harbers M."/>
            <person name="Hayashi Y."/>
            <person name="Hensch T.K."/>
            <person name="Hirokawa N."/>
            <person name="Hill D."/>
            <person name="Huminiecki L."/>
            <person name="Iacono M."/>
            <person name="Ikeo K."/>
            <person name="Iwama A."/>
            <person name="Ishikawa T."/>
            <person name="Jakt M."/>
            <person name="Kanapin A."/>
            <person name="Katoh M."/>
            <person name="Kawasawa Y."/>
            <person name="Kelso J."/>
            <person name="Kitamura H."/>
            <person name="Kitano H."/>
            <person name="Kollias G."/>
            <person name="Krishnan S.P."/>
            <person name="Kruger A."/>
            <person name="Kummerfeld S.K."/>
            <person name="Kurochkin I.V."/>
            <person name="Lareau L.F."/>
            <person name="Lazarevic D."/>
            <person name="Lipovich L."/>
            <person name="Liu J."/>
            <person name="Liuni S."/>
            <person name="McWilliam S."/>
            <person name="Madan Babu M."/>
            <person name="Madera M."/>
            <person name="Marchionni L."/>
            <person name="Matsuda H."/>
            <person name="Matsuzawa S."/>
            <person name="Miki H."/>
            <person name="Mignone F."/>
            <person name="Miyake S."/>
            <person name="Morris K."/>
            <person name="Mottagui-Tabar S."/>
            <person name="Mulder N."/>
            <person name="Nakano N."/>
            <person name="Nakauchi H."/>
            <person name="Ng P."/>
            <person name="Nilsson R."/>
            <person name="Nishiguchi S."/>
            <person name="Nishikawa S."/>
            <person name="Nori F."/>
            <person name="Ohara O."/>
            <person name="Okazaki Y."/>
            <person name="Orlando V."/>
            <person name="Pang K.C."/>
            <person name="Pavan W.J."/>
            <person name="Pavesi G."/>
            <person name="Pesole G."/>
            <person name="Petrovsky N."/>
            <person name="Piazza S."/>
            <person name="Reed J."/>
            <person name="Reid J.F."/>
            <person name="Ring B.Z."/>
            <person name="Ringwald M."/>
            <person name="Rost B."/>
            <person name="Ruan Y."/>
            <person name="Salzberg S.L."/>
            <person name="Sandelin A."/>
            <person name="Schneider C."/>
            <person name="Schoenbach C."/>
            <person name="Sekiguchi K."/>
            <person name="Semple C.A."/>
            <person name="Seno S."/>
            <person name="Sessa L."/>
            <person name="Sheng Y."/>
            <person name="Shibata Y."/>
            <person name="Shimada H."/>
            <person name="Shimada K."/>
            <person name="Silva D."/>
            <person name="Sinclair B."/>
            <person name="Sperling S."/>
            <person name="Stupka E."/>
            <person name="Sugiura K."/>
            <person name="Sultana R."/>
            <person name="Takenaka Y."/>
            <person name="Taki K."/>
            <person name="Tammoja K."/>
            <person name="Tan S.L."/>
            <person name="Tang S."/>
            <person name="Taylor M.S."/>
            <person name="Tegner J."/>
            <person name="Teichmann S.A."/>
            <person name="Ueda H.R."/>
            <person name="van Nimwegen E."/>
            <person name="Verardo R."/>
            <person name="Wei C.L."/>
            <person name="Yagi K."/>
            <person name="Yamanishi H."/>
            <person name="Zabarovsky E."/>
            <person name="Zhu S."/>
            <person name="Zimmer A."/>
            <person name="Hide W."/>
            <person name="Bult C."/>
            <person name="Grimmond S.M."/>
            <person name="Teasdale R.D."/>
            <person name="Liu E.T."/>
            <person name="Brusic V."/>
            <person name="Quackenbush J."/>
            <person name="Wahlestedt C."/>
            <person name="Mattick J.S."/>
            <person name="Hume D.A."/>
            <person name="Kai C."/>
            <person name="Sasaki D."/>
            <person name="Tomaru Y."/>
            <person name="Fukuda S."/>
            <person name="Kanamori-Katayama M."/>
            <person name="Suzuki M."/>
            <person name="Aoki J."/>
            <person name="Arakawa T."/>
            <person name="Iida J."/>
            <person name="Imamura K."/>
            <person name="Itoh M."/>
            <person name="Kato T."/>
            <person name="Kawaji H."/>
            <person name="Kawagashira N."/>
            <person name="Kawashima T."/>
            <person name="Kojima M."/>
            <person name="Kondo S."/>
            <person name="Konno H."/>
            <person name="Nakano K."/>
            <person name="Ninomiya N."/>
            <person name="Nishio T."/>
            <person name="Okada M."/>
            <person name="Plessy C."/>
            <person name="Shibata K."/>
            <person name="Shiraki T."/>
            <person name="Suzuki S."/>
            <person name="Tagami M."/>
            <person name="Waki K."/>
            <person name="Watahiki A."/>
            <person name="Okamura-Oho Y."/>
            <person name="Suzuki H."/>
            <person name="Kawai J."/>
            <person name="Hayashizaki Y."/>
        </authorList>
    </citation>
    <scope>NUCLEOTIDE SEQUENCE [LARGE SCALE MRNA]</scope>
    <source>
        <strain>C57BL/6J</strain>
        <tissue>Head</tissue>
    </source>
</reference>
<reference key="2">
    <citation type="journal article" date="2009" name="PLoS Biol.">
        <title>Lineage-specific biology revealed by a finished genome assembly of the mouse.</title>
        <authorList>
            <person name="Church D.M."/>
            <person name="Goodstadt L."/>
            <person name="Hillier L.W."/>
            <person name="Zody M.C."/>
            <person name="Goldstein S."/>
            <person name="She X."/>
            <person name="Bult C.J."/>
            <person name="Agarwala R."/>
            <person name="Cherry J.L."/>
            <person name="DiCuccio M."/>
            <person name="Hlavina W."/>
            <person name="Kapustin Y."/>
            <person name="Meric P."/>
            <person name="Maglott D."/>
            <person name="Birtle Z."/>
            <person name="Marques A.C."/>
            <person name="Graves T."/>
            <person name="Zhou S."/>
            <person name="Teague B."/>
            <person name="Potamousis K."/>
            <person name="Churas C."/>
            <person name="Place M."/>
            <person name="Herschleb J."/>
            <person name="Runnheim R."/>
            <person name="Forrest D."/>
            <person name="Amos-Landgraf J."/>
            <person name="Schwartz D.C."/>
            <person name="Cheng Z."/>
            <person name="Lindblad-Toh K."/>
            <person name="Eichler E.E."/>
            <person name="Ponting C.P."/>
        </authorList>
    </citation>
    <scope>NUCLEOTIDE SEQUENCE [LARGE SCALE GENOMIC DNA]</scope>
    <source>
        <strain>C57BL/6J</strain>
    </source>
</reference>
<reference key="3">
    <citation type="journal article" date="2004" name="Genome Res.">
        <title>The status, quality, and expansion of the NIH full-length cDNA project: the Mammalian Gene Collection (MGC).</title>
        <authorList>
            <consortium name="The MGC Project Team"/>
        </authorList>
    </citation>
    <scope>NUCLEOTIDE SEQUENCE [LARGE SCALE MRNA]</scope>
    <source>
        <strain>FVB/N</strain>
        <tissue>Kidney</tissue>
    </source>
</reference>
<reference key="4">
    <citation type="journal article" date="2013" name="J. Biol. Chem.">
        <title>Mitochondrial ribosomal RNA (rRNA) methyltransferase family members are positioned to modify nascent rRNA in foci near the mitochondrial DNA nucleoid.</title>
        <authorList>
            <person name="Lee K.W."/>
            <person name="Okot-Kotber C."/>
            <person name="LaComb J.F."/>
            <person name="Bogenhagen D.F."/>
        </authorList>
    </citation>
    <scope>SUBCELLULAR LOCATION</scope>
</reference>
<protein>
    <recommendedName>
        <fullName evidence="2">rRNA methyltransferase 3, mitochondrial</fullName>
        <ecNumber evidence="2">2.1.1.-</ecNumber>
    </recommendedName>
    <alternativeName>
        <fullName evidence="2">16S rRNA (guanosine(1370)-2'-O)-methyltransferase</fullName>
    </alternativeName>
    <alternativeName>
        <fullName evidence="2">16S rRNA [Gm1370] 2'-O-methyltransferase</fullName>
    </alternativeName>
    <alternativeName>
        <fullName evidence="2">RNA methyltransferase-like protein 1</fullName>
    </alternativeName>
</protein>
<gene>
    <name evidence="2" type="primary">Mrm3</name>
    <name evidence="7" type="synonym">Rnmtl1</name>
</gene>
<proteinExistence type="evidence at transcript level"/>
<name>MRM3_MOUSE</name>
<feature type="transit peptide" description="Mitochondrion" evidence="3">
    <location>
        <begin position="1"/>
        <end position="40"/>
    </location>
</feature>
<feature type="chain" id="PRO_0000311302" description="rRNA methyltransferase 3, mitochondrial">
    <location>
        <begin position="41"/>
        <end position="418"/>
    </location>
</feature>
<feature type="region of interest" description="Disordered" evidence="4">
    <location>
        <begin position="41"/>
        <end position="90"/>
    </location>
</feature>
<feature type="compositionally biased region" description="Basic and acidic residues" evidence="4">
    <location>
        <begin position="47"/>
        <end position="58"/>
    </location>
</feature>
<feature type="compositionally biased region" description="Polar residues" evidence="4">
    <location>
        <begin position="65"/>
        <end position="85"/>
    </location>
</feature>
<feature type="binding site" evidence="1">
    <location>
        <position position="354"/>
    </location>
    <ligand>
        <name>S-adenosyl-L-methionine</name>
        <dbReference type="ChEBI" id="CHEBI:59789"/>
    </ligand>
</feature>
<feature type="binding site" evidence="1">
    <location>
        <position position="378"/>
    </location>
    <ligand>
        <name>S-adenosyl-L-methionine</name>
        <dbReference type="ChEBI" id="CHEBI:59789"/>
    </ligand>
</feature>
<feature type="binding site" evidence="1">
    <location>
        <position position="387"/>
    </location>
    <ligand>
        <name>S-adenosyl-L-methionine</name>
        <dbReference type="ChEBI" id="CHEBI:59789"/>
    </ligand>
</feature>
<feature type="sequence conflict" description="In Ref. 3; AAH38288/AAI15624/AAI15623." evidence="6" ref="3">
    <original>R</original>
    <variation>K</variation>
    <location>
        <position position="102"/>
    </location>
</feature>
<feature type="sequence conflict" description="In Ref. 3; AAH38288/AAI15624/AAI15623." evidence="6" ref="3">
    <original>P</original>
    <variation>L</variation>
    <location>
        <position position="203"/>
    </location>
</feature>
<feature type="sequence conflict" description="In Ref. 1; BAE28150." evidence="6" ref="1">
    <original>A</original>
    <variation>V</variation>
    <location>
        <position position="350"/>
    </location>
</feature>